<proteinExistence type="inferred from homology"/>
<name>EFTU_GYMST</name>
<geneLocation type="chloroplast"/>
<keyword id="KW-0150">Chloroplast</keyword>
<keyword id="KW-0251">Elongation factor</keyword>
<keyword id="KW-0342">GTP-binding</keyword>
<keyword id="KW-0378">Hydrolase</keyword>
<keyword id="KW-0547">Nucleotide-binding</keyword>
<keyword id="KW-0934">Plastid</keyword>
<keyword id="KW-0648">Protein biosynthesis</keyword>
<organism>
    <name type="scientific">Gymnochlora stellata</name>
    <dbReference type="NCBI Taxonomy" id="67809"/>
    <lineage>
        <taxon>Eukaryota</taxon>
        <taxon>Sar</taxon>
        <taxon>Rhizaria</taxon>
        <taxon>Cercozoa</taxon>
        <taxon>Chlorarachniophyceae</taxon>
        <taxon>Gymnochlora</taxon>
    </lineage>
</organism>
<protein>
    <recommendedName>
        <fullName>Elongation factor Tu, chloroplastic</fullName>
        <shortName>EF-Tu</shortName>
        <ecNumber evidence="2">3.6.5.3</ecNumber>
    </recommendedName>
</protein>
<sequence>TLTAAITMALSTISGKQGKKYDDIDSAPEEKARGITINTAHVEYETETRHYAHVDCPGHADYVKNMITGAAQMDGAILVVSGADGPMPQTKEHLLLAKQVGVPSIVVFLNKEDQVDDEELLELVELEVREMLDNYDFPGDDTPIITGSALLALQALTDTTDAIGRGSNPWVDKILTLMDNVDEYIPTPERETEKPFLMAVEDVFSITGRGTVATGRVERGGIKIGDTVEIVGLKETRSTTVTGLKMFQKMLQESIAGDNVGMLLRGIQKTDIQRGMVIAQPGSITPHVSFEAQVYVLTKEEGGRHTPFLSGYRPQFYVRTTDVTGKVESLKSDEDKSEMKMVVPGDRVTMSVELVQPIAIEKG</sequence>
<dbReference type="EC" id="3.6.5.3" evidence="2"/>
<dbReference type="EMBL" id="AB008007">
    <property type="protein sequence ID" value="BAA25891.1"/>
    <property type="molecule type" value="Genomic_DNA"/>
</dbReference>
<dbReference type="SMR" id="O63930"/>
<dbReference type="GO" id="GO:0009507">
    <property type="term" value="C:chloroplast"/>
    <property type="evidence" value="ECO:0007669"/>
    <property type="project" value="UniProtKB-SubCell"/>
</dbReference>
<dbReference type="GO" id="GO:0005739">
    <property type="term" value="C:mitochondrion"/>
    <property type="evidence" value="ECO:0007669"/>
    <property type="project" value="TreeGrafter"/>
</dbReference>
<dbReference type="GO" id="GO:0005525">
    <property type="term" value="F:GTP binding"/>
    <property type="evidence" value="ECO:0007669"/>
    <property type="project" value="UniProtKB-KW"/>
</dbReference>
<dbReference type="GO" id="GO:0003924">
    <property type="term" value="F:GTPase activity"/>
    <property type="evidence" value="ECO:0007669"/>
    <property type="project" value="InterPro"/>
</dbReference>
<dbReference type="GO" id="GO:0003746">
    <property type="term" value="F:translation elongation factor activity"/>
    <property type="evidence" value="ECO:0007669"/>
    <property type="project" value="UniProtKB-KW"/>
</dbReference>
<dbReference type="GO" id="GO:0070125">
    <property type="term" value="P:mitochondrial translational elongation"/>
    <property type="evidence" value="ECO:0007669"/>
    <property type="project" value="TreeGrafter"/>
</dbReference>
<dbReference type="CDD" id="cd01884">
    <property type="entry name" value="EF_Tu"/>
    <property type="match status" value="1"/>
</dbReference>
<dbReference type="CDD" id="cd03697">
    <property type="entry name" value="EFTU_II"/>
    <property type="match status" value="1"/>
</dbReference>
<dbReference type="CDD" id="cd03707">
    <property type="entry name" value="EFTU_III"/>
    <property type="match status" value="1"/>
</dbReference>
<dbReference type="FunFam" id="2.40.30.10:FF:000001">
    <property type="entry name" value="Elongation factor Tu"/>
    <property type="match status" value="1"/>
</dbReference>
<dbReference type="FunFam" id="3.40.50.300:FF:000003">
    <property type="entry name" value="Elongation factor Tu"/>
    <property type="match status" value="1"/>
</dbReference>
<dbReference type="Gene3D" id="3.40.50.300">
    <property type="entry name" value="P-loop containing nucleotide triphosphate hydrolases"/>
    <property type="match status" value="1"/>
</dbReference>
<dbReference type="Gene3D" id="2.40.30.10">
    <property type="entry name" value="Translation factors"/>
    <property type="match status" value="2"/>
</dbReference>
<dbReference type="InterPro" id="IPR041709">
    <property type="entry name" value="EF-Tu_GTP-bd"/>
</dbReference>
<dbReference type="InterPro" id="IPR050055">
    <property type="entry name" value="EF-Tu_GTPase"/>
</dbReference>
<dbReference type="InterPro" id="IPR004161">
    <property type="entry name" value="EFTu-like_2"/>
</dbReference>
<dbReference type="InterPro" id="IPR033720">
    <property type="entry name" value="EFTU_2"/>
</dbReference>
<dbReference type="InterPro" id="IPR031157">
    <property type="entry name" value="G_TR_CS"/>
</dbReference>
<dbReference type="InterPro" id="IPR027417">
    <property type="entry name" value="P-loop_NTPase"/>
</dbReference>
<dbReference type="InterPro" id="IPR000795">
    <property type="entry name" value="T_Tr_GTP-bd_dom"/>
</dbReference>
<dbReference type="InterPro" id="IPR009000">
    <property type="entry name" value="Transl_B-barrel_sf"/>
</dbReference>
<dbReference type="InterPro" id="IPR009001">
    <property type="entry name" value="Transl_elong_EF1A/Init_IF2_C"/>
</dbReference>
<dbReference type="InterPro" id="IPR004541">
    <property type="entry name" value="Transl_elong_EFTu/EF1A_bac/org"/>
</dbReference>
<dbReference type="InterPro" id="IPR004160">
    <property type="entry name" value="Transl_elong_EFTu/EF1A_C"/>
</dbReference>
<dbReference type="NCBIfam" id="TIGR00485">
    <property type="entry name" value="EF-Tu"/>
    <property type="match status" value="1"/>
</dbReference>
<dbReference type="NCBIfam" id="NF000766">
    <property type="entry name" value="PRK00049.1"/>
    <property type="match status" value="1"/>
</dbReference>
<dbReference type="NCBIfam" id="NF009372">
    <property type="entry name" value="PRK12735.1"/>
    <property type="match status" value="1"/>
</dbReference>
<dbReference type="NCBIfam" id="NF009373">
    <property type="entry name" value="PRK12736.1"/>
    <property type="match status" value="1"/>
</dbReference>
<dbReference type="PANTHER" id="PTHR43721:SF5">
    <property type="entry name" value="ELONGATION FACTOR TU, CHLOROPLASTIC"/>
    <property type="match status" value="1"/>
</dbReference>
<dbReference type="PANTHER" id="PTHR43721">
    <property type="entry name" value="ELONGATION FACTOR TU-RELATED"/>
    <property type="match status" value="1"/>
</dbReference>
<dbReference type="Pfam" id="PF00009">
    <property type="entry name" value="GTP_EFTU"/>
    <property type="match status" value="1"/>
</dbReference>
<dbReference type="Pfam" id="PF03144">
    <property type="entry name" value="GTP_EFTU_D2"/>
    <property type="match status" value="1"/>
</dbReference>
<dbReference type="Pfam" id="PF03143">
    <property type="entry name" value="GTP_EFTU_D3"/>
    <property type="match status" value="1"/>
</dbReference>
<dbReference type="PRINTS" id="PR00315">
    <property type="entry name" value="ELONGATNFCT"/>
</dbReference>
<dbReference type="SUPFAM" id="SSF50465">
    <property type="entry name" value="EF-Tu/eEF-1alpha/eIF2-gamma C-terminal domain"/>
    <property type="match status" value="1"/>
</dbReference>
<dbReference type="SUPFAM" id="SSF52540">
    <property type="entry name" value="P-loop containing nucleoside triphosphate hydrolases"/>
    <property type="match status" value="1"/>
</dbReference>
<dbReference type="SUPFAM" id="SSF50447">
    <property type="entry name" value="Translation proteins"/>
    <property type="match status" value="1"/>
</dbReference>
<dbReference type="PROSITE" id="PS00301">
    <property type="entry name" value="G_TR_1"/>
    <property type="match status" value="1"/>
</dbReference>
<dbReference type="PROSITE" id="PS51722">
    <property type="entry name" value="G_TR_2"/>
    <property type="match status" value="1"/>
</dbReference>
<gene>
    <name type="primary">tufA</name>
</gene>
<comment type="function">
    <text evidence="2">GTP hydrolase that promotes the GTP-dependent binding of aminoacyl-tRNA to the A-site of ribosomes during protein biosynthesis.</text>
</comment>
<comment type="catalytic activity">
    <reaction evidence="2">
        <text>GTP + H2O = GDP + phosphate + H(+)</text>
        <dbReference type="Rhea" id="RHEA:19669"/>
        <dbReference type="ChEBI" id="CHEBI:15377"/>
        <dbReference type="ChEBI" id="CHEBI:15378"/>
        <dbReference type="ChEBI" id="CHEBI:37565"/>
        <dbReference type="ChEBI" id="CHEBI:43474"/>
        <dbReference type="ChEBI" id="CHEBI:58189"/>
        <dbReference type="EC" id="3.6.5.3"/>
    </reaction>
    <physiologicalReaction direction="left-to-right" evidence="2">
        <dbReference type="Rhea" id="RHEA:19670"/>
    </physiologicalReaction>
</comment>
<comment type="subcellular location">
    <subcellularLocation>
        <location>Plastid</location>
        <location>Chloroplast</location>
    </subcellularLocation>
</comment>
<comment type="similarity">
    <text evidence="3">Belongs to the TRAFAC class translation factor GTPase superfamily. Classic translation factor GTPase family. EF-Tu/EF-1A subfamily.</text>
</comment>
<feature type="chain" id="PRO_0000091463" description="Elongation factor Tu, chloroplastic">
    <location>
        <begin position="1" status="less than"/>
        <end position="363" status="greater than"/>
    </location>
</feature>
<feature type="domain" description="tr-type G" evidence="3">
    <location>
        <begin position="1" status="less than"/>
        <end position="189"/>
    </location>
</feature>
<feature type="binding site" evidence="1">
    <location>
        <begin position="55"/>
        <end position="59"/>
    </location>
    <ligand>
        <name>GTP</name>
        <dbReference type="ChEBI" id="CHEBI:37565"/>
    </ligand>
</feature>
<feature type="binding site" evidence="1">
    <location>
        <begin position="110"/>
        <end position="113"/>
    </location>
    <ligand>
        <name>GTP</name>
        <dbReference type="ChEBI" id="CHEBI:37565"/>
    </ligand>
</feature>
<feature type="non-terminal residue">
    <location>
        <position position="1"/>
    </location>
</feature>
<feature type="non-terminal residue">
    <location>
        <position position="363"/>
    </location>
</feature>
<accession>O63930</accession>
<evidence type="ECO:0000250" key="1"/>
<evidence type="ECO:0000255" key="2">
    <source>
        <dbReference type="HAMAP-Rule" id="MF_00118"/>
    </source>
</evidence>
<evidence type="ECO:0000255" key="3">
    <source>
        <dbReference type="PROSITE-ProRule" id="PRU01059"/>
    </source>
</evidence>
<reference key="1">
    <citation type="journal article" date="1997" name="J. Mol. Evol.">
        <title>The origin of chlorarachniophyte plastids, as inferred from phylogenetic comparisons of amino acid sequences of EF-Tu.</title>
        <authorList>
            <person name="Ishida K."/>
            <person name="Cao Y."/>
            <person name="Hasegawa M."/>
            <person name="Okada N."/>
            <person name="Hara Y."/>
        </authorList>
    </citation>
    <scope>NUCLEOTIDE SEQUENCE [GENOMIC DNA]</scope>
</reference>